<organism>
    <name type="scientific">Buchnera aphidicola subsp. Baizongia pistaciae (strain Bp)</name>
    <dbReference type="NCBI Taxonomy" id="224915"/>
    <lineage>
        <taxon>Bacteria</taxon>
        <taxon>Pseudomonadati</taxon>
        <taxon>Pseudomonadota</taxon>
        <taxon>Gammaproteobacteria</taxon>
        <taxon>Enterobacterales</taxon>
        <taxon>Erwiniaceae</taxon>
        <taxon>Buchnera</taxon>
    </lineage>
</organism>
<proteinExistence type="inferred from homology"/>
<sequence>MSKICQITGKKPITGNNRSHAMNATKRRFFPNLHFHKFWNPKTKRFIILRVSAKGMRNIDKLGLNSLKIKKLHK</sequence>
<feature type="chain" id="PRO_0000178446" description="Large ribosomal subunit protein bL28">
    <location>
        <begin position="1"/>
        <end position="74"/>
    </location>
</feature>
<accession>Q89AY8</accession>
<reference key="1">
    <citation type="journal article" date="2003" name="Proc. Natl. Acad. Sci. U.S.A.">
        <title>Reductive genome evolution in Buchnera aphidicola.</title>
        <authorList>
            <person name="van Ham R.C.H.J."/>
            <person name="Kamerbeek J."/>
            <person name="Palacios C."/>
            <person name="Rausell C."/>
            <person name="Abascal F."/>
            <person name="Bastolla U."/>
            <person name="Fernandez J.M."/>
            <person name="Jimenez L."/>
            <person name="Postigo M."/>
            <person name="Silva F.J."/>
            <person name="Tamames J."/>
            <person name="Viguera E."/>
            <person name="Latorre A."/>
            <person name="Valencia A."/>
            <person name="Moran F."/>
            <person name="Moya A."/>
        </authorList>
    </citation>
    <scope>NUCLEOTIDE SEQUENCE [LARGE SCALE GENOMIC DNA]</scope>
    <source>
        <strain>Bp</strain>
    </source>
</reference>
<gene>
    <name evidence="1" type="primary">rpmB</name>
    <name type="ordered locus">bbp_080</name>
</gene>
<evidence type="ECO:0000255" key="1">
    <source>
        <dbReference type="HAMAP-Rule" id="MF_00373"/>
    </source>
</evidence>
<evidence type="ECO:0000305" key="2"/>
<protein>
    <recommendedName>
        <fullName evidence="1">Large ribosomal subunit protein bL28</fullName>
    </recommendedName>
    <alternativeName>
        <fullName evidence="2">50S ribosomal protein L28</fullName>
    </alternativeName>
</protein>
<dbReference type="EMBL" id="AE016826">
    <property type="protein sequence ID" value="AAO26816.1"/>
    <property type="molecule type" value="Genomic_DNA"/>
</dbReference>
<dbReference type="RefSeq" id="WP_011091217.1">
    <property type="nucleotide sequence ID" value="NC_004545.1"/>
</dbReference>
<dbReference type="SMR" id="Q89AY8"/>
<dbReference type="STRING" id="224915.bbp_080"/>
<dbReference type="KEGG" id="bab:bbp_080"/>
<dbReference type="eggNOG" id="COG0227">
    <property type="taxonomic scope" value="Bacteria"/>
</dbReference>
<dbReference type="HOGENOM" id="CLU_064548_3_1_6"/>
<dbReference type="OrthoDB" id="9805609at2"/>
<dbReference type="Proteomes" id="UP000000601">
    <property type="component" value="Chromosome"/>
</dbReference>
<dbReference type="GO" id="GO:1990904">
    <property type="term" value="C:ribonucleoprotein complex"/>
    <property type="evidence" value="ECO:0007669"/>
    <property type="project" value="UniProtKB-KW"/>
</dbReference>
<dbReference type="GO" id="GO:0005840">
    <property type="term" value="C:ribosome"/>
    <property type="evidence" value="ECO:0007669"/>
    <property type="project" value="UniProtKB-KW"/>
</dbReference>
<dbReference type="GO" id="GO:0003735">
    <property type="term" value="F:structural constituent of ribosome"/>
    <property type="evidence" value="ECO:0007669"/>
    <property type="project" value="InterPro"/>
</dbReference>
<dbReference type="GO" id="GO:0006412">
    <property type="term" value="P:translation"/>
    <property type="evidence" value="ECO:0007669"/>
    <property type="project" value="UniProtKB-UniRule"/>
</dbReference>
<dbReference type="FunFam" id="2.30.170.40:FF:000001">
    <property type="entry name" value="50S ribosomal protein L28"/>
    <property type="match status" value="1"/>
</dbReference>
<dbReference type="Gene3D" id="2.30.170.40">
    <property type="entry name" value="Ribosomal protein L28/L24"/>
    <property type="match status" value="1"/>
</dbReference>
<dbReference type="HAMAP" id="MF_00373">
    <property type="entry name" value="Ribosomal_bL28"/>
    <property type="match status" value="1"/>
</dbReference>
<dbReference type="InterPro" id="IPR050096">
    <property type="entry name" value="Bacterial_rp_bL28"/>
</dbReference>
<dbReference type="InterPro" id="IPR026569">
    <property type="entry name" value="Ribosomal_bL28"/>
</dbReference>
<dbReference type="InterPro" id="IPR034704">
    <property type="entry name" value="Ribosomal_bL28/bL31-like_sf"/>
</dbReference>
<dbReference type="InterPro" id="IPR001383">
    <property type="entry name" value="Ribosomal_bL28_bact-type"/>
</dbReference>
<dbReference type="InterPro" id="IPR037147">
    <property type="entry name" value="Ribosomal_bL28_sf"/>
</dbReference>
<dbReference type="NCBIfam" id="TIGR00009">
    <property type="entry name" value="L28"/>
    <property type="match status" value="1"/>
</dbReference>
<dbReference type="PANTHER" id="PTHR39080">
    <property type="entry name" value="50S RIBOSOMAL PROTEIN L28"/>
    <property type="match status" value="1"/>
</dbReference>
<dbReference type="PANTHER" id="PTHR39080:SF1">
    <property type="entry name" value="LARGE RIBOSOMAL SUBUNIT PROTEIN BL28A"/>
    <property type="match status" value="1"/>
</dbReference>
<dbReference type="Pfam" id="PF00830">
    <property type="entry name" value="Ribosomal_L28"/>
    <property type="match status" value="1"/>
</dbReference>
<dbReference type="SUPFAM" id="SSF143800">
    <property type="entry name" value="L28p-like"/>
    <property type="match status" value="1"/>
</dbReference>
<name>RL28_BUCBP</name>
<keyword id="KW-1185">Reference proteome</keyword>
<keyword id="KW-0687">Ribonucleoprotein</keyword>
<keyword id="KW-0689">Ribosomal protein</keyword>
<comment type="similarity">
    <text evidence="1">Belongs to the bacterial ribosomal protein bL28 family.</text>
</comment>